<proteinExistence type="inferred from homology"/>
<protein>
    <recommendedName>
        <fullName evidence="1">Ribonuclease 3</fullName>
        <ecNumber evidence="1">3.1.26.3</ecNumber>
    </recommendedName>
    <alternativeName>
        <fullName evidence="1">Ribonuclease III</fullName>
        <shortName evidence="1">RNase III</shortName>
    </alternativeName>
</protein>
<feature type="chain" id="PRO_1000075814" description="Ribonuclease 3">
    <location>
        <begin position="1"/>
        <end position="225"/>
    </location>
</feature>
<feature type="domain" description="RNase III" evidence="1">
    <location>
        <begin position="7"/>
        <end position="129"/>
    </location>
</feature>
<feature type="domain" description="DRBM" evidence="1">
    <location>
        <begin position="155"/>
        <end position="225"/>
    </location>
</feature>
<feature type="active site" evidence="1">
    <location>
        <position position="46"/>
    </location>
</feature>
<feature type="active site" evidence="1">
    <location>
        <position position="118"/>
    </location>
</feature>
<feature type="binding site" evidence="1">
    <location>
        <position position="42"/>
    </location>
    <ligand>
        <name>Mg(2+)</name>
        <dbReference type="ChEBI" id="CHEBI:18420"/>
    </ligand>
</feature>
<feature type="binding site" evidence="1">
    <location>
        <position position="115"/>
    </location>
    <ligand>
        <name>Mg(2+)</name>
        <dbReference type="ChEBI" id="CHEBI:18420"/>
    </ligand>
</feature>
<feature type="binding site" evidence="1">
    <location>
        <position position="118"/>
    </location>
    <ligand>
        <name>Mg(2+)</name>
        <dbReference type="ChEBI" id="CHEBI:18420"/>
    </ligand>
</feature>
<evidence type="ECO:0000255" key="1">
    <source>
        <dbReference type="HAMAP-Rule" id="MF_00104"/>
    </source>
</evidence>
<gene>
    <name evidence="1" type="primary">rnc</name>
    <name type="ordered locus">Shew_1054</name>
</gene>
<keyword id="KW-0963">Cytoplasm</keyword>
<keyword id="KW-0255">Endonuclease</keyword>
<keyword id="KW-0378">Hydrolase</keyword>
<keyword id="KW-0460">Magnesium</keyword>
<keyword id="KW-0479">Metal-binding</keyword>
<keyword id="KW-0507">mRNA processing</keyword>
<keyword id="KW-0540">Nuclease</keyword>
<keyword id="KW-1185">Reference proteome</keyword>
<keyword id="KW-0694">RNA-binding</keyword>
<keyword id="KW-0698">rRNA processing</keyword>
<keyword id="KW-0699">rRNA-binding</keyword>
<keyword id="KW-0819">tRNA processing</keyword>
<reference key="1">
    <citation type="submission" date="2007-03" db="EMBL/GenBank/DDBJ databases">
        <title>Complete sequence of Shewanella loihica PV-4.</title>
        <authorList>
            <consortium name="US DOE Joint Genome Institute"/>
            <person name="Copeland A."/>
            <person name="Lucas S."/>
            <person name="Lapidus A."/>
            <person name="Barry K."/>
            <person name="Detter J.C."/>
            <person name="Glavina del Rio T."/>
            <person name="Hammon N."/>
            <person name="Israni S."/>
            <person name="Dalin E."/>
            <person name="Tice H."/>
            <person name="Pitluck S."/>
            <person name="Chain P."/>
            <person name="Malfatti S."/>
            <person name="Shin M."/>
            <person name="Vergez L."/>
            <person name="Schmutz J."/>
            <person name="Larimer F."/>
            <person name="Land M."/>
            <person name="Hauser L."/>
            <person name="Kyrpides N."/>
            <person name="Mikhailova N."/>
            <person name="Romine M.F."/>
            <person name="Serres G."/>
            <person name="Fredrickson J."/>
            <person name="Tiedje J."/>
            <person name="Richardson P."/>
        </authorList>
    </citation>
    <scope>NUCLEOTIDE SEQUENCE [LARGE SCALE GENOMIC DNA]</scope>
    <source>
        <strain>ATCC BAA-1088 / PV-4</strain>
    </source>
</reference>
<sequence length="225" mass="25127">MEPIKNLPRLGRILGYQFQQIALLEQALTHRSAASKHNERLEFLGDSILSIVISDALYHQFPKATEGDLSRMRATLVCGKMLAEIAKEFKLGDYLKLGPGELKSGGFRRESILADAMEAIIGAIYLDADIETCRTLVLNWYKSRLAVIEPVNQKDPKTLLQEHLQGFKQPLPVYTVVNISGEAHAQTFTVECKVEQLKEAVIGVANSRRKAEQIAAAEVLERIKK</sequence>
<accession>A3QBS7</accession>
<dbReference type="EC" id="3.1.26.3" evidence="1"/>
<dbReference type="EMBL" id="CP000606">
    <property type="protein sequence ID" value="ABO22925.1"/>
    <property type="molecule type" value="Genomic_DNA"/>
</dbReference>
<dbReference type="RefSeq" id="WP_011864858.1">
    <property type="nucleotide sequence ID" value="NC_009092.1"/>
</dbReference>
<dbReference type="SMR" id="A3QBS7"/>
<dbReference type="STRING" id="323850.Shew_1054"/>
<dbReference type="KEGG" id="slo:Shew_1054"/>
<dbReference type="eggNOG" id="COG0571">
    <property type="taxonomic scope" value="Bacteria"/>
</dbReference>
<dbReference type="HOGENOM" id="CLU_000907_1_1_6"/>
<dbReference type="OrthoDB" id="9805026at2"/>
<dbReference type="Proteomes" id="UP000001558">
    <property type="component" value="Chromosome"/>
</dbReference>
<dbReference type="GO" id="GO:0005737">
    <property type="term" value="C:cytoplasm"/>
    <property type="evidence" value="ECO:0007669"/>
    <property type="project" value="UniProtKB-SubCell"/>
</dbReference>
<dbReference type="GO" id="GO:0003725">
    <property type="term" value="F:double-stranded RNA binding"/>
    <property type="evidence" value="ECO:0007669"/>
    <property type="project" value="TreeGrafter"/>
</dbReference>
<dbReference type="GO" id="GO:0046872">
    <property type="term" value="F:metal ion binding"/>
    <property type="evidence" value="ECO:0007669"/>
    <property type="project" value="UniProtKB-KW"/>
</dbReference>
<dbReference type="GO" id="GO:0004525">
    <property type="term" value="F:ribonuclease III activity"/>
    <property type="evidence" value="ECO:0007669"/>
    <property type="project" value="UniProtKB-UniRule"/>
</dbReference>
<dbReference type="GO" id="GO:0019843">
    <property type="term" value="F:rRNA binding"/>
    <property type="evidence" value="ECO:0007669"/>
    <property type="project" value="UniProtKB-KW"/>
</dbReference>
<dbReference type="GO" id="GO:0006397">
    <property type="term" value="P:mRNA processing"/>
    <property type="evidence" value="ECO:0007669"/>
    <property type="project" value="UniProtKB-UniRule"/>
</dbReference>
<dbReference type="GO" id="GO:0010468">
    <property type="term" value="P:regulation of gene expression"/>
    <property type="evidence" value="ECO:0007669"/>
    <property type="project" value="TreeGrafter"/>
</dbReference>
<dbReference type="GO" id="GO:0006364">
    <property type="term" value="P:rRNA processing"/>
    <property type="evidence" value="ECO:0007669"/>
    <property type="project" value="UniProtKB-UniRule"/>
</dbReference>
<dbReference type="GO" id="GO:0008033">
    <property type="term" value="P:tRNA processing"/>
    <property type="evidence" value="ECO:0007669"/>
    <property type="project" value="UniProtKB-KW"/>
</dbReference>
<dbReference type="CDD" id="cd10845">
    <property type="entry name" value="DSRM_RNAse_III_family"/>
    <property type="match status" value="1"/>
</dbReference>
<dbReference type="CDD" id="cd00593">
    <property type="entry name" value="RIBOc"/>
    <property type="match status" value="1"/>
</dbReference>
<dbReference type="FunFam" id="1.10.1520.10:FF:000001">
    <property type="entry name" value="Ribonuclease 3"/>
    <property type="match status" value="1"/>
</dbReference>
<dbReference type="FunFam" id="3.30.160.20:FF:000003">
    <property type="entry name" value="Ribonuclease 3"/>
    <property type="match status" value="1"/>
</dbReference>
<dbReference type="Gene3D" id="3.30.160.20">
    <property type="match status" value="1"/>
</dbReference>
<dbReference type="Gene3D" id="1.10.1520.10">
    <property type="entry name" value="Ribonuclease III domain"/>
    <property type="match status" value="1"/>
</dbReference>
<dbReference type="HAMAP" id="MF_00104">
    <property type="entry name" value="RNase_III"/>
    <property type="match status" value="1"/>
</dbReference>
<dbReference type="InterPro" id="IPR014720">
    <property type="entry name" value="dsRBD_dom"/>
</dbReference>
<dbReference type="InterPro" id="IPR011907">
    <property type="entry name" value="RNase_III"/>
</dbReference>
<dbReference type="InterPro" id="IPR000999">
    <property type="entry name" value="RNase_III_dom"/>
</dbReference>
<dbReference type="InterPro" id="IPR036389">
    <property type="entry name" value="RNase_III_sf"/>
</dbReference>
<dbReference type="NCBIfam" id="TIGR02191">
    <property type="entry name" value="RNaseIII"/>
    <property type="match status" value="1"/>
</dbReference>
<dbReference type="PANTHER" id="PTHR11207:SF0">
    <property type="entry name" value="RIBONUCLEASE 3"/>
    <property type="match status" value="1"/>
</dbReference>
<dbReference type="PANTHER" id="PTHR11207">
    <property type="entry name" value="RIBONUCLEASE III"/>
    <property type="match status" value="1"/>
</dbReference>
<dbReference type="Pfam" id="PF00035">
    <property type="entry name" value="dsrm"/>
    <property type="match status" value="1"/>
</dbReference>
<dbReference type="Pfam" id="PF14622">
    <property type="entry name" value="Ribonucleas_3_3"/>
    <property type="match status" value="1"/>
</dbReference>
<dbReference type="SMART" id="SM00358">
    <property type="entry name" value="DSRM"/>
    <property type="match status" value="1"/>
</dbReference>
<dbReference type="SMART" id="SM00535">
    <property type="entry name" value="RIBOc"/>
    <property type="match status" value="1"/>
</dbReference>
<dbReference type="SUPFAM" id="SSF54768">
    <property type="entry name" value="dsRNA-binding domain-like"/>
    <property type="match status" value="1"/>
</dbReference>
<dbReference type="SUPFAM" id="SSF69065">
    <property type="entry name" value="RNase III domain-like"/>
    <property type="match status" value="1"/>
</dbReference>
<dbReference type="PROSITE" id="PS50137">
    <property type="entry name" value="DS_RBD"/>
    <property type="match status" value="1"/>
</dbReference>
<dbReference type="PROSITE" id="PS00517">
    <property type="entry name" value="RNASE_3_1"/>
    <property type="match status" value="1"/>
</dbReference>
<dbReference type="PROSITE" id="PS50142">
    <property type="entry name" value="RNASE_3_2"/>
    <property type="match status" value="1"/>
</dbReference>
<name>RNC_SHELP</name>
<organism>
    <name type="scientific">Shewanella loihica (strain ATCC BAA-1088 / PV-4)</name>
    <dbReference type="NCBI Taxonomy" id="323850"/>
    <lineage>
        <taxon>Bacteria</taxon>
        <taxon>Pseudomonadati</taxon>
        <taxon>Pseudomonadota</taxon>
        <taxon>Gammaproteobacteria</taxon>
        <taxon>Alteromonadales</taxon>
        <taxon>Shewanellaceae</taxon>
        <taxon>Shewanella</taxon>
    </lineage>
</organism>
<comment type="function">
    <text evidence="1">Digests double-stranded RNA. Involved in the processing of primary rRNA transcript to yield the immediate precursors to the large and small rRNAs (23S and 16S). Processes some mRNAs, and tRNAs when they are encoded in the rRNA operon. Processes pre-crRNA and tracrRNA of type II CRISPR loci if present in the organism.</text>
</comment>
<comment type="catalytic activity">
    <reaction evidence="1">
        <text>Endonucleolytic cleavage to 5'-phosphomonoester.</text>
        <dbReference type="EC" id="3.1.26.3"/>
    </reaction>
</comment>
<comment type="cofactor">
    <cofactor evidence="1">
        <name>Mg(2+)</name>
        <dbReference type="ChEBI" id="CHEBI:18420"/>
    </cofactor>
</comment>
<comment type="subunit">
    <text evidence="1">Homodimer.</text>
</comment>
<comment type="subcellular location">
    <subcellularLocation>
        <location evidence="1">Cytoplasm</location>
    </subcellularLocation>
</comment>
<comment type="similarity">
    <text evidence="1">Belongs to the ribonuclease III family.</text>
</comment>